<feature type="chain" id="PRO_0000372176" description="Putative antiporter subunit mnhG2">
    <location>
        <begin position="1"/>
        <end position="145"/>
    </location>
</feature>
<feature type="transmembrane region" description="Helical" evidence="2">
    <location>
        <begin position="11"/>
        <end position="31"/>
    </location>
</feature>
<feature type="transmembrane region" description="Helical" evidence="2">
    <location>
        <begin position="51"/>
        <end position="71"/>
    </location>
</feature>
<feature type="transmembrane region" description="Helical" evidence="2">
    <location>
        <begin position="72"/>
        <end position="92"/>
    </location>
</feature>
<proteinExistence type="uncertain"/>
<reference key="1">
    <citation type="journal article" date="2004" name="Proc. Natl. Acad. Sci. U.S.A.">
        <title>Complete genomes of two clinical Staphylococcus aureus strains: evidence for the rapid evolution of virulence and drug resistance.</title>
        <authorList>
            <person name="Holden M.T.G."/>
            <person name="Feil E.J."/>
            <person name="Lindsay J.A."/>
            <person name="Peacock S.J."/>
            <person name="Day N.P.J."/>
            <person name="Enright M.C."/>
            <person name="Foster T.J."/>
            <person name="Moore C.E."/>
            <person name="Hurst L."/>
            <person name="Atkin R."/>
            <person name="Barron A."/>
            <person name="Bason N."/>
            <person name="Bentley S.D."/>
            <person name="Chillingworth C."/>
            <person name="Chillingworth T."/>
            <person name="Churcher C."/>
            <person name="Clark L."/>
            <person name="Corton C."/>
            <person name="Cronin A."/>
            <person name="Doggett J."/>
            <person name="Dowd L."/>
            <person name="Feltwell T."/>
            <person name="Hance Z."/>
            <person name="Harris B."/>
            <person name="Hauser H."/>
            <person name="Holroyd S."/>
            <person name="Jagels K."/>
            <person name="James K.D."/>
            <person name="Lennard N."/>
            <person name="Line A."/>
            <person name="Mayes R."/>
            <person name="Moule S."/>
            <person name="Mungall K."/>
            <person name="Ormond D."/>
            <person name="Quail M.A."/>
            <person name="Rabbinowitsch E."/>
            <person name="Rutherford K.M."/>
            <person name="Sanders M."/>
            <person name="Sharp S."/>
            <person name="Simmonds M."/>
            <person name="Stevens K."/>
            <person name="Whitehead S."/>
            <person name="Barrell B.G."/>
            <person name="Spratt B.G."/>
            <person name="Parkhill J."/>
        </authorList>
    </citation>
    <scope>NUCLEOTIDE SEQUENCE [LARGE SCALE GENOMIC DNA]</scope>
    <source>
        <strain>MRSA252</strain>
    </source>
</reference>
<keyword id="KW-0050">Antiport</keyword>
<keyword id="KW-1003">Cell membrane</keyword>
<keyword id="KW-0406">Ion transport</keyword>
<keyword id="KW-0472">Membrane</keyword>
<keyword id="KW-0812">Transmembrane</keyword>
<keyword id="KW-1133">Transmembrane helix</keyword>
<keyword id="KW-0813">Transport</keyword>
<protein>
    <recommendedName>
        <fullName>Putative antiporter subunit mnhG2</fullName>
    </recommendedName>
    <alternativeName>
        <fullName>Mrp complex subunit G2</fullName>
    </alternativeName>
    <alternativeName>
        <fullName>Putative NADH-ubiquinone oxidoreductase subunit mnhF2</fullName>
    </alternativeName>
</protein>
<gene>
    <name type="primary">mnhG2</name>
    <name type="synonym">mrpG2</name>
    <name type="ordered locus">SAR0636</name>
</gene>
<evidence type="ECO:0000250" key="1"/>
<evidence type="ECO:0000255" key="2"/>
<evidence type="ECO:0000305" key="3"/>
<dbReference type="EMBL" id="BX571856">
    <property type="status" value="NOT_ANNOTATED_CDS"/>
    <property type="molecule type" value="Genomic_DNA"/>
</dbReference>
<dbReference type="SMR" id="P0C947"/>
<dbReference type="Proteomes" id="UP000000596">
    <property type="component" value="Chromosome"/>
</dbReference>
<dbReference type="GO" id="GO:0005886">
    <property type="term" value="C:plasma membrane"/>
    <property type="evidence" value="ECO:0007669"/>
    <property type="project" value="UniProtKB-SubCell"/>
</dbReference>
<dbReference type="GO" id="GO:0015385">
    <property type="term" value="F:sodium:proton antiporter activity"/>
    <property type="evidence" value="ECO:0007669"/>
    <property type="project" value="TreeGrafter"/>
</dbReference>
<dbReference type="InterPro" id="IPR005133">
    <property type="entry name" value="PhaG_MnhG_YufB"/>
</dbReference>
<dbReference type="NCBIfam" id="TIGR01300">
    <property type="entry name" value="CPA3_mnhG_phaG"/>
    <property type="match status" value="1"/>
</dbReference>
<dbReference type="NCBIfam" id="NF009236">
    <property type="entry name" value="PRK12586.1"/>
    <property type="match status" value="1"/>
</dbReference>
<dbReference type="NCBIfam" id="NF009314">
    <property type="entry name" value="PRK12674.1-2"/>
    <property type="match status" value="1"/>
</dbReference>
<dbReference type="PANTHER" id="PTHR34703">
    <property type="entry name" value="ANTIPORTER SUBUNIT MNHG2-RELATED"/>
    <property type="match status" value="1"/>
</dbReference>
<dbReference type="PANTHER" id="PTHR34703:SF1">
    <property type="entry name" value="ANTIPORTER SUBUNIT MNHG2-RELATED"/>
    <property type="match status" value="1"/>
</dbReference>
<dbReference type="Pfam" id="PF03334">
    <property type="entry name" value="PhaG_MnhG_YufB"/>
    <property type="match status" value="1"/>
</dbReference>
<organism>
    <name type="scientific">Staphylococcus aureus (strain MRSA252)</name>
    <dbReference type="NCBI Taxonomy" id="282458"/>
    <lineage>
        <taxon>Bacteria</taxon>
        <taxon>Bacillati</taxon>
        <taxon>Bacillota</taxon>
        <taxon>Bacilli</taxon>
        <taxon>Bacillales</taxon>
        <taxon>Staphylococcaceae</taxon>
        <taxon>Staphylococcus</taxon>
    </lineage>
</organism>
<comment type="subunit">
    <text evidence="1">May form a heterooligomeric complex that consists of seven subunits: mnhA2, mnhB2, mnhC2, mnhD2, mnhE2, mnhF2 and mnhG2.</text>
</comment>
<comment type="subcellular location">
    <subcellularLocation>
        <location evidence="3">Cell membrane</location>
        <topology evidence="3">Multi-pass membrane protein</topology>
    </subcellularLocation>
</comment>
<comment type="similarity">
    <text evidence="3">Belongs to the CPA3 antiporters (TC 2.A.63) subunit G family.</text>
</comment>
<comment type="caution">
    <text evidence="3">Could be the product of a pseudogene.</text>
</comment>
<comment type="sequence caution" evidence="3">
    <conflict type="erroneous termination">
        <sequence resource="EMBL" id="BX571856"/>
    </conflict>
    <text>Truncated C-terminus.</text>
</comment>
<accession>P0C947</accession>
<name>MNHG2_STAAR</name>
<sequence>MEITKEIFSLIAAVMLLLGSFIALISAIGIVKFQDVFLRSHAATKSSTLSVLLTLIGVLIYFIVNTGFFSVRLLLSLVFINLTSPVGMHLVARAAYRNGAYMYRKNDDHTHASILLSSNEQNSTKALQLRAKKREEYRKKWYQND</sequence>